<protein>
    <recommendedName>
        <fullName>Carbamate kinase</fullName>
        <ecNumber>2.7.2.2</ecNumber>
    </recommendedName>
</protein>
<keyword id="KW-0056">Arginine metabolism</keyword>
<keyword id="KW-0067">ATP-binding</keyword>
<keyword id="KW-0418">Kinase</keyword>
<keyword id="KW-0547">Nucleotide-binding</keyword>
<keyword id="KW-0808">Transferase</keyword>
<organism>
    <name type="scientific">Trichomonas vaginalis</name>
    <dbReference type="NCBI Taxonomy" id="5722"/>
    <lineage>
        <taxon>Eukaryota</taxon>
        <taxon>Metamonada</taxon>
        <taxon>Parabasalia</taxon>
        <taxon>Trichomonadida</taxon>
        <taxon>Trichomonadidae</taxon>
        <taxon>Trichomonas</taxon>
    </lineage>
</organism>
<gene>
    <name type="primary">CBK</name>
</gene>
<accession>O96432</accession>
<sequence length="314" mass="33927">MRIVVALGGNALLQRGMKGTFQDQQAACRLAMSQIVKIVKDGNELVMTHGNGPQCGAIFLQNVAGEQEKVPAMPLHVCGAETQGFLGELLQQELDGALRAEGIKKNVVSIVTQSFVDPKDPAFQNPTKPIGPFYSKEEAEFLRNERGYNMVEDAGRGYRMIVPSPVPQKFVEKEAIKTLVNSGFIVVCSGGGGIPVILDEQENRIEGVDAVIDKDLGASVLAAATNADAFMILTDVPEALLNYRKENETAIRQATVAEMEKYIEEGHFIKGSMLPKVQACLRFVKSTGKPALITALDCALQALKGERGTKIVPN</sequence>
<comment type="catalytic activity">
    <reaction>
        <text>hydrogencarbonate + NH4(+) + ATP = carbamoyl phosphate + ADP + H2O + H(+)</text>
        <dbReference type="Rhea" id="RHEA:10152"/>
        <dbReference type="ChEBI" id="CHEBI:15377"/>
        <dbReference type="ChEBI" id="CHEBI:15378"/>
        <dbReference type="ChEBI" id="CHEBI:17544"/>
        <dbReference type="ChEBI" id="CHEBI:28938"/>
        <dbReference type="ChEBI" id="CHEBI:30616"/>
        <dbReference type="ChEBI" id="CHEBI:58228"/>
        <dbReference type="ChEBI" id="CHEBI:456216"/>
        <dbReference type="EC" id="2.7.2.2"/>
    </reaction>
</comment>
<comment type="pathway">
    <text>Metabolic intermediate metabolism; carbamoyl phosphate degradation; CO(2) and NH(3) from carbamoyl phosphate: step 1/1.</text>
</comment>
<comment type="subunit">
    <text>Homodimer.</text>
</comment>
<comment type="similarity">
    <text evidence="1">Belongs to the carbamate kinase family.</text>
</comment>
<evidence type="ECO:0000305" key="1"/>
<proteinExistence type="evidence at protein level"/>
<dbReference type="EC" id="2.7.2.2"/>
<dbReference type="EMBL" id="AF050082">
    <property type="protein sequence ID" value="AAD02507.1"/>
    <property type="molecule type" value="Genomic_DNA"/>
</dbReference>
<dbReference type="SMR" id="O96432"/>
<dbReference type="VEuPathDB" id="TrichDB:TVAG_261970"/>
<dbReference type="VEuPathDB" id="TrichDB:TVAGG3_0595540"/>
<dbReference type="eggNOG" id="ENOG502S00U">
    <property type="taxonomic scope" value="Eukaryota"/>
</dbReference>
<dbReference type="BRENDA" id="2.7.2.2">
    <property type="organism ID" value="6459"/>
</dbReference>
<dbReference type="UniPathway" id="UPA00996">
    <property type="reaction ID" value="UER00366"/>
</dbReference>
<dbReference type="GO" id="GO:0005829">
    <property type="term" value="C:cytosol"/>
    <property type="evidence" value="ECO:0007669"/>
    <property type="project" value="TreeGrafter"/>
</dbReference>
<dbReference type="GO" id="GO:0005524">
    <property type="term" value="F:ATP binding"/>
    <property type="evidence" value="ECO:0007669"/>
    <property type="project" value="UniProtKB-KW"/>
</dbReference>
<dbReference type="GO" id="GO:0008804">
    <property type="term" value="F:carbamate kinase activity"/>
    <property type="evidence" value="ECO:0007669"/>
    <property type="project" value="UniProtKB-EC"/>
</dbReference>
<dbReference type="GO" id="GO:0019546">
    <property type="term" value="P:arginine deiminase pathway"/>
    <property type="evidence" value="ECO:0007669"/>
    <property type="project" value="TreeGrafter"/>
</dbReference>
<dbReference type="CDD" id="cd04235">
    <property type="entry name" value="AAK_CK"/>
    <property type="match status" value="1"/>
</dbReference>
<dbReference type="FunFam" id="3.40.1160.10:FF:000007">
    <property type="entry name" value="Carbamate kinase"/>
    <property type="match status" value="1"/>
</dbReference>
<dbReference type="Gene3D" id="3.40.1160.10">
    <property type="entry name" value="Acetylglutamate kinase-like"/>
    <property type="match status" value="1"/>
</dbReference>
<dbReference type="InterPro" id="IPR036393">
    <property type="entry name" value="AceGlu_kinase-like_sf"/>
</dbReference>
<dbReference type="InterPro" id="IPR001048">
    <property type="entry name" value="Asp/Glu/Uridylate_kinase"/>
</dbReference>
<dbReference type="InterPro" id="IPR003964">
    <property type="entry name" value="Carb_kinase"/>
</dbReference>
<dbReference type="NCBIfam" id="TIGR00746">
    <property type="entry name" value="arcC"/>
    <property type="match status" value="1"/>
</dbReference>
<dbReference type="NCBIfam" id="NF009007">
    <property type="entry name" value="PRK12352.1"/>
    <property type="match status" value="1"/>
</dbReference>
<dbReference type="PANTHER" id="PTHR30409">
    <property type="entry name" value="CARBAMATE KINASE"/>
    <property type="match status" value="1"/>
</dbReference>
<dbReference type="PANTHER" id="PTHR30409:SF1">
    <property type="entry name" value="CARBAMATE KINASE-RELATED"/>
    <property type="match status" value="1"/>
</dbReference>
<dbReference type="Pfam" id="PF00696">
    <property type="entry name" value="AA_kinase"/>
    <property type="match status" value="1"/>
</dbReference>
<dbReference type="PIRSF" id="PIRSF000723">
    <property type="entry name" value="Carbamate_kin"/>
    <property type="match status" value="1"/>
</dbReference>
<dbReference type="PRINTS" id="PR01469">
    <property type="entry name" value="CARBMTKINASE"/>
</dbReference>
<dbReference type="SUPFAM" id="SSF53633">
    <property type="entry name" value="Carbamate kinase-like"/>
    <property type="match status" value="1"/>
</dbReference>
<reference key="1">
    <citation type="journal article" date="2000" name="Exp. Parasitol.">
        <title>Trichomonas vaginalis: characterization, expression, and phylogenetic analysis of a carbamate kinase gene sequence.</title>
        <authorList>
            <person name="Minotto L."/>
            <person name="Edwards M.R."/>
            <person name="Bagnara A.S."/>
        </authorList>
    </citation>
    <scope>NUCLEOTIDE SEQUENCE [GENOMIC DNA]</scope>
    <scope>IDENTIFICATION BY MASS SPECTROMETRY</scope>
    <scope>CHARACTERIZATION</scope>
    <source>
        <strain>WAA38</strain>
    </source>
</reference>
<name>CBK_TRIVA</name>
<feature type="chain" id="PRO_0000185153" description="Carbamate kinase">
    <location>
        <begin position="1"/>
        <end position="314"/>
    </location>
</feature>